<feature type="chain" id="PRO_0000311524" description="Iron-sulfur cluster insertion protein ErpA">
    <location>
        <begin position="1"/>
        <end position="116"/>
    </location>
</feature>
<feature type="binding site" evidence="1">
    <location>
        <position position="44"/>
    </location>
    <ligand>
        <name>iron-sulfur cluster</name>
        <dbReference type="ChEBI" id="CHEBI:30408"/>
    </ligand>
</feature>
<feature type="binding site" evidence="1">
    <location>
        <position position="108"/>
    </location>
    <ligand>
        <name>iron-sulfur cluster</name>
        <dbReference type="ChEBI" id="CHEBI:30408"/>
    </ligand>
</feature>
<feature type="binding site" evidence="1">
    <location>
        <position position="110"/>
    </location>
    <ligand>
        <name>iron-sulfur cluster</name>
        <dbReference type="ChEBI" id="CHEBI:30408"/>
    </ligand>
</feature>
<evidence type="ECO:0000255" key="1">
    <source>
        <dbReference type="HAMAP-Rule" id="MF_01380"/>
    </source>
</evidence>
<accession>Q02TA1</accession>
<proteinExistence type="inferred from homology"/>
<comment type="function">
    <text evidence="1">Required for insertion of 4Fe-4S clusters for at least IspG.</text>
</comment>
<comment type="cofactor">
    <cofactor evidence="1">
        <name>iron-sulfur cluster</name>
        <dbReference type="ChEBI" id="CHEBI:30408"/>
    </cofactor>
    <text evidence="1">Binds 1 iron-sulfur cluster per subunit.</text>
</comment>
<comment type="subunit">
    <text evidence="1">Homodimer.</text>
</comment>
<comment type="similarity">
    <text evidence="1">Belongs to the HesB/IscA family.</text>
</comment>
<reference key="1">
    <citation type="journal article" date="2006" name="Genome Biol.">
        <title>Genomic analysis reveals that Pseudomonas aeruginosa virulence is combinatorial.</title>
        <authorList>
            <person name="Lee D.G."/>
            <person name="Urbach J.M."/>
            <person name="Wu G."/>
            <person name="Liberati N.T."/>
            <person name="Feinbaum R.L."/>
            <person name="Miyata S."/>
            <person name="Diggins L.T."/>
            <person name="He J."/>
            <person name="Saucier M."/>
            <person name="Deziel E."/>
            <person name="Friedman L."/>
            <person name="Li L."/>
            <person name="Grills G."/>
            <person name="Montgomery K."/>
            <person name="Kucherlapati R."/>
            <person name="Rahme L.G."/>
            <person name="Ausubel F.M."/>
        </authorList>
    </citation>
    <scope>NUCLEOTIDE SEQUENCE [LARGE SCALE GENOMIC DNA]</scope>
    <source>
        <strain>UCBPP-PA14</strain>
    </source>
</reference>
<dbReference type="EMBL" id="CP000438">
    <property type="protein sequence ID" value="ABJ15626.1"/>
    <property type="molecule type" value="Genomic_DNA"/>
</dbReference>
<dbReference type="RefSeq" id="WP_003085254.1">
    <property type="nucleotide sequence ID" value="NZ_CP034244.1"/>
</dbReference>
<dbReference type="SMR" id="Q02TA1"/>
<dbReference type="GeneID" id="77219168"/>
<dbReference type="KEGG" id="pau:PA14_08510"/>
<dbReference type="PseudoCAP" id="PA14_08510"/>
<dbReference type="HOGENOM" id="CLU_069054_5_3_6"/>
<dbReference type="BioCyc" id="PAER208963:G1G74-706-MONOMER"/>
<dbReference type="Proteomes" id="UP000000653">
    <property type="component" value="Chromosome"/>
</dbReference>
<dbReference type="GO" id="GO:0005829">
    <property type="term" value="C:cytosol"/>
    <property type="evidence" value="ECO:0007669"/>
    <property type="project" value="TreeGrafter"/>
</dbReference>
<dbReference type="GO" id="GO:0051537">
    <property type="term" value="F:2 iron, 2 sulfur cluster binding"/>
    <property type="evidence" value="ECO:0007669"/>
    <property type="project" value="UniProtKB-ARBA"/>
</dbReference>
<dbReference type="GO" id="GO:0051539">
    <property type="term" value="F:4 iron, 4 sulfur cluster binding"/>
    <property type="evidence" value="ECO:0007669"/>
    <property type="project" value="TreeGrafter"/>
</dbReference>
<dbReference type="GO" id="GO:0005506">
    <property type="term" value="F:iron ion binding"/>
    <property type="evidence" value="ECO:0007669"/>
    <property type="project" value="UniProtKB-UniRule"/>
</dbReference>
<dbReference type="GO" id="GO:0016226">
    <property type="term" value="P:iron-sulfur cluster assembly"/>
    <property type="evidence" value="ECO:0007669"/>
    <property type="project" value="UniProtKB-UniRule"/>
</dbReference>
<dbReference type="FunFam" id="2.60.300.12:FF:000002">
    <property type="entry name" value="Iron-sulfur cluster insertion protein ErpA"/>
    <property type="match status" value="1"/>
</dbReference>
<dbReference type="Gene3D" id="2.60.300.12">
    <property type="entry name" value="HesB-like domain"/>
    <property type="match status" value="1"/>
</dbReference>
<dbReference type="HAMAP" id="MF_01380">
    <property type="entry name" value="Fe_S_insert_ErpA"/>
    <property type="match status" value="1"/>
</dbReference>
<dbReference type="InterPro" id="IPR000361">
    <property type="entry name" value="FeS_biogenesis"/>
</dbReference>
<dbReference type="InterPro" id="IPR016092">
    <property type="entry name" value="FeS_cluster_insertion"/>
</dbReference>
<dbReference type="InterPro" id="IPR017870">
    <property type="entry name" value="FeS_cluster_insertion_CS"/>
</dbReference>
<dbReference type="InterPro" id="IPR023063">
    <property type="entry name" value="FeS_cluster_insertion_RrpA"/>
</dbReference>
<dbReference type="InterPro" id="IPR035903">
    <property type="entry name" value="HesB-like_dom_sf"/>
</dbReference>
<dbReference type="NCBIfam" id="TIGR00049">
    <property type="entry name" value="iron-sulfur cluster assembly accessory protein"/>
    <property type="match status" value="1"/>
</dbReference>
<dbReference type="NCBIfam" id="NF010147">
    <property type="entry name" value="PRK13623.1"/>
    <property type="match status" value="1"/>
</dbReference>
<dbReference type="PANTHER" id="PTHR43011">
    <property type="entry name" value="IRON-SULFUR CLUSTER ASSEMBLY 2 HOMOLOG, MITOCHONDRIAL"/>
    <property type="match status" value="1"/>
</dbReference>
<dbReference type="PANTHER" id="PTHR43011:SF1">
    <property type="entry name" value="IRON-SULFUR CLUSTER ASSEMBLY 2 HOMOLOG, MITOCHONDRIAL"/>
    <property type="match status" value="1"/>
</dbReference>
<dbReference type="Pfam" id="PF01521">
    <property type="entry name" value="Fe-S_biosyn"/>
    <property type="match status" value="1"/>
</dbReference>
<dbReference type="SUPFAM" id="SSF89360">
    <property type="entry name" value="HesB-like domain"/>
    <property type="match status" value="1"/>
</dbReference>
<dbReference type="PROSITE" id="PS01152">
    <property type="entry name" value="HESB"/>
    <property type="match status" value="1"/>
</dbReference>
<protein>
    <recommendedName>
        <fullName evidence="1">Iron-sulfur cluster insertion protein ErpA</fullName>
    </recommendedName>
</protein>
<sequence length="116" mass="12484">MSIETFTPTPLLFTPGAANKVKTLIDEEGNPRLKLRVFVTGGGCSGFQYGFTFDEDIADDDTVIERDGVGLVVDPMSFQYLAGSEVDYQEGLEGSRFVIKNPNAATTCGCGQSFSI</sequence>
<organism>
    <name type="scientific">Pseudomonas aeruginosa (strain UCBPP-PA14)</name>
    <dbReference type="NCBI Taxonomy" id="208963"/>
    <lineage>
        <taxon>Bacteria</taxon>
        <taxon>Pseudomonadati</taxon>
        <taxon>Pseudomonadota</taxon>
        <taxon>Gammaproteobacteria</taxon>
        <taxon>Pseudomonadales</taxon>
        <taxon>Pseudomonadaceae</taxon>
        <taxon>Pseudomonas</taxon>
    </lineage>
</organism>
<gene>
    <name evidence="1" type="primary">erpA</name>
    <name type="ordered locus">PA14_08510</name>
</gene>
<name>ERPA_PSEAB</name>
<keyword id="KW-0408">Iron</keyword>
<keyword id="KW-0411">Iron-sulfur</keyword>
<keyword id="KW-0479">Metal-binding</keyword>